<keyword id="KW-0687">Ribonucleoprotein</keyword>
<keyword id="KW-0689">Ribosomal protein</keyword>
<name>RL10E_SACI1</name>
<organism>
    <name type="scientific">Saccharolobus islandicus (strain Y.N.15.51 / Yellowstone #2)</name>
    <name type="common">Sulfolobus islandicus</name>
    <dbReference type="NCBI Taxonomy" id="419942"/>
    <lineage>
        <taxon>Archaea</taxon>
        <taxon>Thermoproteota</taxon>
        <taxon>Thermoprotei</taxon>
        <taxon>Sulfolobales</taxon>
        <taxon>Sulfolobaceae</taxon>
        <taxon>Saccharolobus</taxon>
    </lineage>
</organism>
<accession>C3NFZ1</accession>
<feature type="chain" id="PRO_1000206202" description="Large ribosomal subunit protein uL16">
    <location>
        <begin position="1"/>
        <end position="178"/>
    </location>
</feature>
<proteinExistence type="inferred from homology"/>
<evidence type="ECO:0000255" key="1">
    <source>
        <dbReference type="HAMAP-Rule" id="MF_00448"/>
    </source>
</evidence>
<evidence type="ECO:0000305" key="2"/>
<sequence length="178" mass="20387">MPLRPGRCYRHFSGPAYTRKEYIPGIPQPKITKFTSGNPNGDYDYEVRLITTEIGQIRHNALEAVRTITLKTLTKRTGSETSFFMWILKYPHHVLRENKMMAFAGADRLQDGMRLSFGTPIGTAARIEKLGEILIVVKVKKEHLDFAKEALKIASKKLPLRTRIEIIPLRPIRQEVQS</sequence>
<protein>
    <recommendedName>
        <fullName evidence="1">Large ribosomal subunit protein uL16</fullName>
    </recommendedName>
    <alternativeName>
        <fullName evidence="2">50S ribosomal protein L10e</fullName>
    </alternativeName>
</protein>
<dbReference type="EMBL" id="CP001404">
    <property type="protein sequence ID" value="ACP48109.1"/>
    <property type="molecule type" value="Genomic_DNA"/>
</dbReference>
<dbReference type="RefSeq" id="WP_012711781.1">
    <property type="nucleotide sequence ID" value="NC_012623.1"/>
</dbReference>
<dbReference type="SMR" id="C3NFZ1"/>
<dbReference type="KEGG" id="sin:YN1551_1002"/>
<dbReference type="HOGENOM" id="CLU_084051_0_2_2"/>
<dbReference type="Proteomes" id="UP000006818">
    <property type="component" value="Chromosome"/>
</dbReference>
<dbReference type="GO" id="GO:1990904">
    <property type="term" value="C:ribonucleoprotein complex"/>
    <property type="evidence" value="ECO:0007669"/>
    <property type="project" value="UniProtKB-KW"/>
</dbReference>
<dbReference type="GO" id="GO:0005840">
    <property type="term" value="C:ribosome"/>
    <property type="evidence" value="ECO:0007669"/>
    <property type="project" value="UniProtKB-KW"/>
</dbReference>
<dbReference type="GO" id="GO:0003735">
    <property type="term" value="F:structural constituent of ribosome"/>
    <property type="evidence" value="ECO:0007669"/>
    <property type="project" value="InterPro"/>
</dbReference>
<dbReference type="GO" id="GO:0006412">
    <property type="term" value="P:translation"/>
    <property type="evidence" value="ECO:0007669"/>
    <property type="project" value="UniProtKB-UniRule"/>
</dbReference>
<dbReference type="CDD" id="cd01433">
    <property type="entry name" value="Ribosomal_L16_L10e"/>
    <property type="match status" value="1"/>
</dbReference>
<dbReference type="FunFam" id="3.90.1170.10:FF:000008">
    <property type="entry name" value="50S ribosomal protein L10e"/>
    <property type="match status" value="1"/>
</dbReference>
<dbReference type="Gene3D" id="3.90.1170.10">
    <property type="entry name" value="Ribosomal protein L10e/L16"/>
    <property type="match status" value="1"/>
</dbReference>
<dbReference type="HAMAP" id="MF_00448">
    <property type="entry name" value="Ribosomal_uL16_arch"/>
    <property type="match status" value="1"/>
</dbReference>
<dbReference type="InterPro" id="IPR047873">
    <property type="entry name" value="Ribosomal_uL16"/>
</dbReference>
<dbReference type="InterPro" id="IPR022981">
    <property type="entry name" value="Ribosomal_uL16_arc"/>
</dbReference>
<dbReference type="InterPro" id="IPR018255">
    <property type="entry name" value="Ribosomal_uL16_CS_euk_arc"/>
</dbReference>
<dbReference type="InterPro" id="IPR016180">
    <property type="entry name" value="Ribosomal_uL16_dom"/>
</dbReference>
<dbReference type="InterPro" id="IPR001197">
    <property type="entry name" value="Ribosomal_uL16_euk_arch"/>
</dbReference>
<dbReference type="InterPro" id="IPR036920">
    <property type="entry name" value="Ribosomal_uL16_sf"/>
</dbReference>
<dbReference type="NCBIfam" id="NF003236">
    <property type="entry name" value="PRK04199.1-1"/>
    <property type="match status" value="1"/>
</dbReference>
<dbReference type="NCBIfam" id="NF003239">
    <property type="entry name" value="PRK04199.1-4"/>
    <property type="match status" value="1"/>
</dbReference>
<dbReference type="PANTHER" id="PTHR11726">
    <property type="entry name" value="60S RIBOSOMAL PROTEIN L10"/>
    <property type="match status" value="1"/>
</dbReference>
<dbReference type="Pfam" id="PF00252">
    <property type="entry name" value="Ribosomal_L16"/>
    <property type="match status" value="1"/>
</dbReference>
<dbReference type="PIRSF" id="PIRSF005590">
    <property type="entry name" value="Ribosomal_L10"/>
    <property type="match status" value="1"/>
</dbReference>
<dbReference type="SUPFAM" id="SSF54686">
    <property type="entry name" value="Ribosomal protein L16p/L10e"/>
    <property type="match status" value="1"/>
</dbReference>
<dbReference type="PROSITE" id="PS01257">
    <property type="entry name" value="RIBOSOMAL_L10E"/>
    <property type="match status" value="1"/>
</dbReference>
<comment type="similarity">
    <text evidence="1">Belongs to the universal ribosomal protein uL16 family.</text>
</comment>
<gene>
    <name evidence="1" type="primary">rpl10e</name>
    <name type="ordered locus">YN1551_1002</name>
</gene>
<reference key="1">
    <citation type="journal article" date="2009" name="Proc. Natl. Acad. Sci. U.S.A.">
        <title>Biogeography of the Sulfolobus islandicus pan-genome.</title>
        <authorList>
            <person name="Reno M.L."/>
            <person name="Held N.L."/>
            <person name="Fields C.J."/>
            <person name="Burke P.V."/>
            <person name="Whitaker R.J."/>
        </authorList>
    </citation>
    <scope>NUCLEOTIDE SEQUENCE [LARGE SCALE GENOMIC DNA]</scope>
    <source>
        <strain>Y.N.15.51 / Yellowstone #2</strain>
    </source>
</reference>